<evidence type="ECO:0000255" key="1">
    <source>
        <dbReference type="HAMAP-Rule" id="MF_01588"/>
    </source>
</evidence>
<organism>
    <name type="scientific">Bordetella bronchiseptica (strain ATCC BAA-588 / NCTC 13252 / RB50)</name>
    <name type="common">Alcaligenes bronchisepticus</name>
    <dbReference type="NCBI Taxonomy" id="257310"/>
    <lineage>
        <taxon>Bacteria</taxon>
        <taxon>Pseudomonadati</taxon>
        <taxon>Pseudomonadota</taxon>
        <taxon>Betaproteobacteria</taxon>
        <taxon>Burkholderiales</taxon>
        <taxon>Alcaligenaceae</taxon>
        <taxon>Bordetella</taxon>
    </lineage>
</organism>
<proteinExistence type="inferred from homology"/>
<protein>
    <recommendedName>
        <fullName evidence="1">DNA ligase</fullName>
        <ecNumber evidence="1">6.5.1.2</ecNumber>
    </recommendedName>
    <alternativeName>
        <fullName evidence="1">Polydeoxyribonucleotide synthase [NAD(+)]</fullName>
    </alternativeName>
</protein>
<feature type="chain" id="PRO_0000313144" description="DNA ligase">
    <location>
        <begin position="1"/>
        <end position="696"/>
    </location>
</feature>
<feature type="domain" description="BRCT" evidence="1">
    <location>
        <begin position="618"/>
        <end position="696"/>
    </location>
</feature>
<feature type="active site" description="N6-AMP-lysine intermediate" evidence="1">
    <location>
        <position position="125"/>
    </location>
</feature>
<feature type="binding site" evidence="1">
    <location>
        <begin position="36"/>
        <end position="40"/>
    </location>
    <ligand>
        <name>NAD(+)</name>
        <dbReference type="ChEBI" id="CHEBI:57540"/>
    </ligand>
</feature>
<feature type="binding site" evidence="1">
    <location>
        <begin position="85"/>
        <end position="86"/>
    </location>
    <ligand>
        <name>NAD(+)</name>
        <dbReference type="ChEBI" id="CHEBI:57540"/>
    </ligand>
</feature>
<feature type="binding site" evidence="1">
    <location>
        <position position="123"/>
    </location>
    <ligand>
        <name>NAD(+)</name>
        <dbReference type="ChEBI" id="CHEBI:57540"/>
    </ligand>
</feature>
<feature type="binding site" evidence="1">
    <location>
        <position position="146"/>
    </location>
    <ligand>
        <name>NAD(+)</name>
        <dbReference type="ChEBI" id="CHEBI:57540"/>
    </ligand>
</feature>
<feature type="binding site" evidence="1">
    <location>
        <position position="181"/>
    </location>
    <ligand>
        <name>NAD(+)</name>
        <dbReference type="ChEBI" id="CHEBI:57540"/>
    </ligand>
</feature>
<feature type="binding site" evidence="1">
    <location>
        <position position="319"/>
    </location>
    <ligand>
        <name>NAD(+)</name>
        <dbReference type="ChEBI" id="CHEBI:57540"/>
    </ligand>
</feature>
<feature type="binding site" evidence="1">
    <location>
        <position position="343"/>
    </location>
    <ligand>
        <name>NAD(+)</name>
        <dbReference type="ChEBI" id="CHEBI:57540"/>
    </ligand>
</feature>
<feature type="binding site" evidence="1">
    <location>
        <position position="437"/>
    </location>
    <ligand>
        <name>Zn(2+)</name>
        <dbReference type="ChEBI" id="CHEBI:29105"/>
    </ligand>
</feature>
<feature type="binding site" evidence="1">
    <location>
        <position position="440"/>
    </location>
    <ligand>
        <name>Zn(2+)</name>
        <dbReference type="ChEBI" id="CHEBI:29105"/>
    </ligand>
</feature>
<feature type="binding site" evidence="1">
    <location>
        <position position="455"/>
    </location>
    <ligand>
        <name>Zn(2+)</name>
        <dbReference type="ChEBI" id="CHEBI:29105"/>
    </ligand>
</feature>
<feature type="binding site" evidence="1">
    <location>
        <position position="461"/>
    </location>
    <ligand>
        <name>Zn(2+)</name>
        <dbReference type="ChEBI" id="CHEBI:29105"/>
    </ligand>
</feature>
<keyword id="KW-0227">DNA damage</keyword>
<keyword id="KW-0234">DNA repair</keyword>
<keyword id="KW-0235">DNA replication</keyword>
<keyword id="KW-0436">Ligase</keyword>
<keyword id="KW-0460">Magnesium</keyword>
<keyword id="KW-0464">Manganese</keyword>
<keyword id="KW-0479">Metal-binding</keyword>
<keyword id="KW-0520">NAD</keyword>
<keyword id="KW-0862">Zinc</keyword>
<sequence>MAQAGPTPQQAIARLRAEIEQHNIRYYVHDDPSVPDAEYDALMRDLQALEAEHPELVTPDSPTQRVGAAPLAEFGSVRHAVPMLSLGNAFDEEDVRAFDKRVADTLRGAGLLGLDQQVEYFCELKLDGLAISLRYEEGRLAQAATRGDGQTGEDVTANIRTIKGVPLRLHGAPRVLEVRGEVLMNRAEFERLNRTQAARGEKVFVNPRNAAAGSLRQLDPRITAQRPLRFFAYSWGEVHGLPEGMPTRFDEPAPGVRVASTLPRDTHGGMLDWLAELGLPVNLRHNHRERGADGLLAFYERIGKLRADLPYDIDGVVYKVDALPSQRVLGFVARAPRFALAHKFPAEEAVTQLLGIEVQVGRTGAITPVARLAPVFVGGVTVTNATLHNEDEIRRKDVRIGDTVIVRRAGDVIPEVVGPVLEKRPADAREFVMLTACPICGSAIERPEGEAIARCTGGLFCAAQRKQTLLHAAGRKALDIEGLGEKLIDQLVDADRVKSLADIYSLTAFELAALERMGKKSAENLVAAIDQARRPALGRLLFALGIRHVGETTARDVARHFGSMERIMDASEEALLAVPDVGGVVAGSIRRFFAEPHNREIVEQLTQQGVHPQAEAEPEGTSLAGKTFVLTGTMPNWTRDEATRRILAAGGKVSGSVSKKTAYLVTGEDAGSKLTKAQELGVPVLDEDGLKALLGL</sequence>
<reference key="1">
    <citation type="journal article" date="2003" name="Nat. Genet.">
        <title>Comparative analysis of the genome sequences of Bordetella pertussis, Bordetella parapertussis and Bordetella bronchiseptica.</title>
        <authorList>
            <person name="Parkhill J."/>
            <person name="Sebaihia M."/>
            <person name="Preston A."/>
            <person name="Murphy L.D."/>
            <person name="Thomson N.R."/>
            <person name="Harris D.E."/>
            <person name="Holden M.T.G."/>
            <person name="Churcher C.M."/>
            <person name="Bentley S.D."/>
            <person name="Mungall K.L."/>
            <person name="Cerdeno-Tarraga A.-M."/>
            <person name="Temple L."/>
            <person name="James K.D."/>
            <person name="Harris B."/>
            <person name="Quail M.A."/>
            <person name="Achtman M."/>
            <person name="Atkin R."/>
            <person name="Baker S."/>
            <person name="Basham D."/>
            <person name="Bason N."/>
            <person name="Cherevach I."/>
            <person name="Chillingworth T."/>
            <person name="Collins M."/>
            <person name="Cronin A."/>
            <person name="Davis P."/>
            <person name="Doggett J."/>
            <person name="Feltwell T."/>
            <person name="Goble A."/>
            <person name="Hamlin N."/>
            <person name="Hauser H."/>
            <person name="Holroyd S."/>
            <person name="Jagels K."/>
            <person name="Leather S."/>
            <person name="Moule S."/>
            <person name="Norberczak H."/>
            <person name="O'Neil S."/>
            <person name="Ormond D."/>
            <person name="Price C."/>
            <person name="Rabbinowitsch E."/>
            <person name="Rutter S."/>
            <person name="Sanders M."/>
            <person name="Saunders D."/>
            <person name="Seeger K."/>
            <person name="Sharp S."/>
            <person name="Simmonds M."/>
            <person name="Skelton J."/>
            <person name="Squares R."/>
            <person name="Squares S."/>
            <person name="Stevens K."/>
            <person name="Unwin L."/>
            <person name="Whitehead S."/>
            <person name="Barrell B.G."/>
            <person name="Maskell D.J."/>
        </authorList>
    </citation>
    <scope>NUCLEOTIDE SEQUENCE [LARGE SCALE GENOMIC DNA]</scope>
    <source>
        <strain>ATCC BAA-588 / NCTC 13252 / RB50</strain>
    </source>
</reference>
<accession>Q7WCJ7</accession>
<name>DNLJ_BORBR</name>
<gene>
    <name evidence="1" type="primary">ligA</name>
    <name type="ordered locus">BB3804</name>
</gene>
<comment type="function">
    <text evidence="1">DNA ligase that catalyzes the formation of phosphodiester linkages between 5'-phosphoryl and 3'-hydroxyl groups in double-stranded DNA using NAD as a coenzyme and as the energy source for the reaction. It is essential for DNA replication and repair of damaged DNA.</text>
</comment>
<comment type="catalytic activity">
    <reaction evidence="1">
        <text>NAD(+) + (deoxyribonucleotide)n-3'-hydroxyl + 5'-phospho-(deoxyribonucleotide)m = (deoxyribonucleotide)n+m + AMP + beta-nicotinamide D-nucleotide.</text>
        <dbReference type="EC" id="6.5.1.2"/>
    </reaction>
</comment>
<comment type="cofactor">
    <cofactor evidence="1">
        <name>Mg(2+)</name>
        <dbReference type="ChEBI" id="CHEBI:18420"/>
    </cofactor>
    <cofactor evidence="1">
        <name>Mn(2+)</name>
        <dbReference type="ChEBI" id="CHEBI:29035"/>
    </cofactor>
</comment>
<comment type="similarity">
    <text evidence="1">Belongs to the NAD-dependent DNA ligase family. LigA subfamily.</text>
</comment>
<dbReference type="EC" id="6.5.1.2" evidence="1"/>
<dbReference type="EMBL" id="BX640448">
    <property type="protein sequence ID" value="CAE35778.1"/>
    <property type="molecule type" value="Genomic_DNA"/>
</dbReference>
<dbReference type="RefSeq" id="WP_003813875.1">
    <property type="nucleotide sequence ID" value="NC_002927.3"/>
</dbReference>
<dbReference type="SMR" id="Q7WCJ7"/>
<dbReference type="GeneID" id="56477713"/>
<dbReference type="KEGG" id="bbr:BB3804"/>
<dbReference type="eggNOG" id="COG0272">
    <property type="taxonomic scope" value="Bacteria"/>
</dbReference>
<dbReference type="HOGENOM" id="CLU_007764_2_1_4"/>
<dbReference type="Proteomes" id="UP000001027">
    <property type="component" value="Chromosome"/>
</dbReference>
<dbReference type="GO" id="GO:0005829">
    <property type="term" value="C:cytosol"/>
    <property type="evidence" value="ECO:0007669"/>
    <property type="project" value="TreeGrafter"/>
</dbReference>
<dbReference type="GO" id="GO:0003677">
    <property type="term" value="F:DNA binding"/>
    <property type="evidence" value="ECO:0007669"/>
    <property type="project" value="InterPro"/>
</dbReference>
<dbReference type="GO" id="GO:0003911">
    <property type="term" value="F:DNA ligase (NAD+) activity"/>
    <property type="evidence" value="ECO:0007669"/>
    <property type="project" value="UniProtKB-UniRule"/>
</dbReference>
<dbReference type="GO" id="GO:0046872">
    <property type="term" value="F:metal ion binding"/>
    <property type="evidence" value="ECO:0007669"/>
    <property type="project" value="UniProtKB-KW"/>
</dbReference>
<dbReference type="GO" id="GO:0006281">
    <property type="term" value="P:DNA repair"/>
    <property type="evidence" value="ECO:0007669"/>
    <property type="project" value="UniProtKB-KW"/>
</dbReference>
<dbReference type="GO" id="GO:0006260">
    <property type="term" value="P:DNA replication"/>
    <property type="evidence" value="ECO:0007669"/>
    <property type="project" value="UniProtKB-KW"/>
</dbReference>
<dbReference type="CDD" id="cd17748">
    <property type="entry name" value="BRCT_DNA_ligase_like"/>
    <property type="match status" value="1"/>
</dbReference>
<dbReference type="CDD" id="cd00114">
    <property type="entry name" value="LIGANc"/>
    <property type="match status" value="1"/>
</dbReference>
<dbReference type="FunFam" id="1.10.150.20:FF:000006">
    <property type="entry name" value="DNA ligase"/>
    <property type="match status" value="1"/>
</dbReference>
<dbReference type="FunFam" id="1.10.150.20:FF:000007">
    <property type="entry name" value="DNA ligase"/>
    <property type="match status" value="1"/>
</dbReference>
<dbReference type="FunFam" id="1.10.287.610:FF:000002">
    <property type="entry name" value="DNA ligase"/>
    <property type="match status" value="1"/>
</dbReference>
<dbReference type="FunFam" id="2.40.50.140:FF:000012">
    <property type="entry name" value="DNA ligase"/>
    <property type="match status" value="1"/>
</dbReference>
<dbReference type="Gene3D" id="6.20.10.30">
    <property type="match status" value="1"/>
</dbReference>
<dbReference type="Gene3D" id="1.10.150.20">
    <property type="entry name" value="5' to 3' exonuclease, C-terminal subdomain"/>
    <property type="match status" value="2"/>
</dbReference>
<dbReference type="Gene3D" id="3.40.50.10190">
    <property type="entry name" value="BRCT domain"/>
    <property type="match status" value="1"/>
</dbReference>
<dbReference type="Gene3D" id="3.30.470.30">
    <property type="entry name" value="DNA ligase/mRNA capping enzyme"/>
    <property type="match status" value="1"/>
</dbReference>
<dbReference type="Gene3D" id="1.10.287.610">
    <property type="entry name" value="Helix hairpin bin"/>
    <property type="match status" value="1"/>
</dbReference>
<dbReference type="Gene3D" id="2.40.50.140">
    <property type="entry name" value="Nucleic acid-binding proteins"/>
    <property type="match status" value="1"/>
</dbReference>
<dbReference type="HAMAP" id="MF_01588">
    <property type="entry name" value="DNA_ligase_A"/>
    <property type="match status" value="1"/>
</dbReference>
<dbReference type="InterPro" id="IPR001357">
    <property type="entry name" value="BRCT_dom"/>
</dbReference>
<dbReference type="InterPro" id="IPR036420">
    <property type="entry name" value="BRCT_dom_sf"/>
</dbReference>
<dbReference type="InterPro" id="IPR041663">
    <property type="entry name" value="DisA/LigA_HHH"/>
</dbReference>
<dbReference type="InterPro" id="IPR001679">
    <property type="entry name" value="DNA_ligase"/>
</dbReference>
<dbReference type="InterPro" id="IPR018239">
    <property type="entry name" value="DNA_ligase_AS"/>
</dbReference>
<dbReference type="InterPro" id="IPR033136">
    <property type="entry name" value="DNA_ligase_CS"/>
</dbReference>
<dbReference type="InterPro" id="IPR013839">
    <property type="entry name" value="DNAligase_adenylation"/>
</dbReference>
<dbReference type="InterPro" id="IPR013840">
    <property type="entry name" value="DNAligase_N"/>
</dbReference>
<dbReference type="InterPro" id="IPR003583">
    <property type="entry name" value="Hlx-hairpin-Hlx_DNA-bd_motif"/>
</dbReference>
<dbReference type="InterPro" id="IPR012340">
    <property type="entry name" value="NA-bd_OB-fold"/>
</dbReference>
<dbReference type="InterPro" id="IPR004150">
    <property type="entry name" value="NAD_DNA_ligase_OB"/>
</dbReference>
<dbReference type="InterPro" id="IPR010994">
    <property type="entry name" value="RuvA_2-like"/>
</dbReference>
<dbReference type="InterPro" id="IPR004149">
    <property type="entry name" value="Znf_DNAligase_C4"/>
</dbReference>
<dbReference type="NCBIfam" id="TIGR00575">
    <property type="entry name" value="dnlj"/>
    <property type="match status" value="1"/>
</dbReference>
<dbReference type="NCBIfam" id="NF005932">
    <property type="entry name" value="PRK07956.1"/>
    <property type="match status" value="1"/>
</dbReference>
<dbReference type="PANTHER" id="PTHR23389">
    <property type="entry name" value="CHROMOSOME TRANSMISSION FIDELITY FACTOR 18"/>
    <property type="match status" value="1"/>
</dbReference>
<dbReference type="PANTHER" id="PTHR23389:SF9">
    <property type="entry name" value="DNA LIGASE"/>
    <property type="match status" value="1"/>
</dbReference>
<dbReference type="Pfam" id="PF00533">
    <property type="entry name" value="BRCT"/>
    <property type="match status" value="1"/>
</dbReference>
<dbReference type="Pfam" id="PF01653">
    <property type="entry name" value="DNA_ligase_aden"/>
    <property type="match status" value="2"/>
</dbReference>
<dbReference type="Pfam" id="PF03120">
    <property type="entry name" value="DNA_ligase_OB"/>
    <property type="match status" value="1"/>
</dbReference>
<dbReference type="Pfam" id="PF03119">
    <property type="entry name" value="DNA_ligase_ZBD"/>
    <property type="match status" value="1"/>
</dbReference>
<dbReference type="Pfam" id="PF12826">
    <property type="entry name" value="HHH_2"/>
    <property type="match status" value="1"/>
</dbReference>
<dbReference type="Pfam" id="PF14520">
    <property type="entry name" value="HHH_5"/>
    <property type="match status" value="1"/>
</dbReference>
<dbReference type="Pfam" id="PF22745">
    <property type="entry name" value="Nlig-Ia"/>
    <property type="match status" value="1"/>
</dbReference>
<dbReference type="PIRSF" id="PIRSF001604">
    <property type="entry name" value="LigA"/>
    <property type="match status" value="1"/>
</dbReference>
<dbReference type="SMART" id="SM00292">
    <property type="entry name" value="BRCT"/>
    <property type="match status" value="1"/>
</dbReference>
<dbReference type="SMART" id="SM00278">
    <property type="entry name" value="HhH1"/>
    <property type="match status" value="4"/>
</dbReference>
<dbReference type="SMART" id="SM00532">
    <property type="entry name" value="LIGANc"/>
    <property type="match status" value="1"/>
</dbReference>
<dbReference type="SUPFAM" id="SSF52113">
    <property type="entry name" value="BRCT domain"/>
    <property type="match status" value="1"/>
</dbReference>
<dbReference type="SUPFAM" id="SSF56091">
    <property type="entry name" value="DNA ligase/mRNA capping enzyme, catalytic domain"/>
    <property type="match status" value="1"/>
</dbReference>
<dbReference type="SUPFAM" id="SSF50249">
    <property type="entry name" value="Nucleic acid-binding proteins"/>
    <property type="match status" value="1"/>
</dbReference>
<dbReference type="SUPFAM" id="SSF47781">
    <property type="entry name" value="RuvA domain 2-like"/>
    <property type="match status" value="1"/>
</dbReference>
<dbReference type="PROSITE" id="PS50172">
    <property type="entry name" value="BRCT"/>
    <property type="match status" value="1"/>
</dbReference>
<dbReference type="PROSITE" id="PS01055">
    <property type="entry name" value="DNA_LIGASE_N1"/>
    <property type="match status" value="1"/>
</dbReference>
<dbReference type="PROSITE" id="PS01056">
    <property type="entry name" value="DNA_LIGASE_N2"/>
    <property type="match status" value="1"/>
</dbReference>